<name>DAPH_THEM4</name>
<evidence type="ECO:0000255" key="1">
    <source>
        <dbReference type="HAMAP-Rule" id="MF_01691"/>
    </source>
</evidence>
<keyword id="KW-0012">Acyltransferase</keyword>
<keyword id="KW-0028">Amino-acid biosynthesis</keyword>
<keyword id="KW-0220">Diaminopimelate biosynthesis</keyword>
<keyword id="KW-0457">Lysine biosynthesis</keyword>
<keyword id="KW-0677">Repeat</keyword>
<keyword id="KW-0808">Transferase</keyword>
<sequence>MNTQEIINLIANSKKRTIAKAYVSGNLKNIKLENVEFVGNELFGVLFGDLKDIENTINKNDIKNYKIEILAKNSAIPLADIKKYNARIEPGAIIRDMVEIGDGAVIMMGAVINIGAVIGEKTMIDMNTVIGGRAIIGKNCHIGAGSVIAGVIEPPSAKPVMIKDNVMVGANAVILEGVEIGEHSVIAAGAVVIEDIPPYSVVAGVPAKVIKKVDKKTESKTQIIDSLRNLK</sequence>
<gene>
    <name evidence="1" type="primary">dapH</name>
    <name type="ordered locus">Tmel_1877</name>
</gene>
<dbReference type="EC" id="2.3.1.89" evidence="1"/>
<dbReference type="EMBL" id="CP000716">
    <property type="protein sequence ID" value="ABR31711.1"/>
    <property type="molecule type" value="Genomic_DNA"/>
</dbReference>
<dbReference type="RefSeq" id="WP_012058069.1">
    <property type="nucleotide sequence ID" value="NC_009616.1"/>
</dbReference>
<dbReference type="SMR" id="A6LP60"/>
<dbReference type="STRING" id="391009.Tmel_1877"/>
<dbReference type="KEGG" id="tme:Tmel_1877"/>
<dbReference type="eggNOG" id="COG2171">
    <property type="taxonomic scope" value="Bacteria"/>
</dbReference>
<dbReference type="HOGENOM" id="CLU_103751_0_0_0"/>
<dbReference type="OrthoDB" id="9788080at2"/>
<dbReference type="UniPathway" id="UPA00034">
    <property type="reaction ID" value="UER00022"/>
</dbReference>
<dbReference type="Proteomes" id="UP000001110">
    <property type="component" value="Chromosome"/>
</dbReference>
<dbReference type="GO" id="GO:0047200">
    <property type="term" value="F:tetrahydrodipicolinate N-acetyltransferase activity"/>
    <property type="evidence" value="ECO:0007669"/>
    <property type="project" value="UniProtKB-EC"/>
</dbReference>
<dbReference type="GO" id="GO:0019877">
    <property type="term" value="P:diaminopimelate biosynthetic process"/>
    <property type="evidence" value="ECO:0007669"/>
    <property type="project" value="UniProtKB-UniRule"/>
</dbReference>
<dbReference type="GO" id="GO:0009089">
    <property type="term" value="P:lysine biosynthetic process via diaminopimelate"/>
    <property type="evidence" value="ECO:0007669"/>
    <property type="project" value="UniProtKB-UniRule"/>
</dbReference>
<dbReference type="CDD" id="cd03350">
    <property type="entry name" value="LbH_THP_succinylT"/>
    <property type="match status" value="1"/>
</dbReference>
<dbReference type="Gene3D" id="2.160.10.10">
    <property type="entry name" value="Hexapeptide repeat proteins"/>
    <property type="match status" value="1"/>
</dbReference>
<dbReference type="Gene3D" id="3.30.70.250">
    <property type="entry name" value="Malonyl-CoA ACP transacylase, ACP-binding"/>
    <property type="match status" value="1"/>
</dbReference>
<dbReference type="HAMAP" id="MF_01691">
    <property type="entry name" value="DapH"/>
    <property type="match status" value="1"/>
</dbReference>
<dbReference type="InterPro" id="IPR019873">
    <property type="entry name" value="DapH"/>
</dbReference>
<dbReference type="InterPro" id="IPR013710">
    <property type="entry name" value="DapH_N"/>
</dbReference>
<dbReference type="InterPro" id="IPR001451">
    <property type="entry name" value="Hexapep"/>
</dbReference>
<dbReference type="InterPro" id="IPR018357">
    <property type="entry name" value="Hexapep_transf_CS"/>
</dbReference>
<dbReference type="InterPro" id="IPR050179">
    <property type="entry name" value="Trans_hexapeptide_repeat"/>
</dbReference>
<dbReference type="InterPro" id="IPR011004">
    <property type="entry name" value="Trimer_LpxA-like_sf"/>
</dbReference>
<dbReference type="NCBIfam" id="TIGR03532">
    <property type="entry name" value="DapD_Ac"/>
    <property type="match status" value="1"/>
</dbReference>
<dbReference type="PANTHER" id="PTHR43300:SF10">
    <property type="entry name" value="2,3,4,5-TETRAHYDROPYRIDINE-2,6-DICARBOXYLATE N-ACETYLTRANSFERASE"/>
    <property type="match status" value="1"/>
</dbReference>
<dbReference type="PANTHER" id="PTHR43300">
    <property type="entry name" value="ACETYLTRANSFERASE"/>
    <property type="match status" value="1"/>
</dbReference>
<dbReference type="Pfam" id="PF08503">
    <property type="entry name" value="DapH_N"/>
    <property type="match status" value="1"/>
</dbReference>
<dbReference type="Pfam" id="PF00132">
    <property type="entry name" value="Hexapep"/>
    <property type="match status" value="2"/>
</dbReference>
<dbReference type="SUPFAM" id="SSF51161">
    <property type="entry name" value="Trimeric LpxA-like enzymes"/>
    <property type="match status" value="1"/>
</dbReference>
<dbReference type="PROSITE" id="PS00101">
    <property type="entry name" value="HEXAPEP_TRANSFERASES"/>
    <property type="match status" value="1"/>
</dbReference>
<organism>
    <name type="scientific">Thermosipho melanesiensis (strain DSM 12029 / CIP 104789 / BI429)</name>
    <dbReference type="NCBI Taxonomy" id="391009"/>
    <lineage>
        <taxon>Bacteria</taxon>
        <taxon>Thermotogati</taxon>
        <taxon>Thermotogota</taxon>
        <taxon>Thermotogae</taxon>
        <taxon>Thermotogales</taxon>
        <taxon>Fervidobacteriaceae</taxon>
        <taxon>Thermosipho</taxon>
    </lineage>
</organism>
<feature type="chain" id="PRO_0000376727" description="2,3,4,5-tetrahydropyridine-2,6-dicarboxylate N-acetyltransferase">
    <location>
        <begin position="1"/>
        <end position="231"/>
    </location>
</feature>
<proteinExistence type="inferred from homology"/>
<comment type="function">
    <text evidence="1">Catalyzes the transfer of an acetyl group from acetyl-CoA to tetrahydrodipicolinate.</text>
</comment>
<comment type="catalytic activity">
    <reaction evidence="1">
        <text>(S)-2,3,4,5-tetrahydrodipicolinate + acetyl-CoA + H2O = L-2-acetamido-6-oxoheptanedioate + CoA</text>
        <dbReference type="Rhea" id="RHEA:13085"/>
        <dbReference type="ChEBI" id="CHEBI:15377"/>
        <dbReference type="ChEBI" id="CHEBI:16845"/>
        <dbReference type="ChEBI" id="CHEBI:57287"/>
        <dbReference type="ChEBI" id="CHEBI:57288"/>
        <dbReference type="ChEBI" id="CHEBI:58117"/>
        <dbReference type="EC" id="2.3.1.89"/>
    </reaction>
</comment>
<comment type="pathway">
    <text evidence="1">Amino-acid biosynthesis; L-lysine biosynthesis via DAP pathway; LL-2,6-diaminopimelate from (S)-tetrahydrodipicolinate (acetylase route): step 1/3.</text>
</comment>
<comment type="similarity">
    <text evidence="1">Belongs to the transferase hexapeptide repeat family. DapH subfamily.</text>
</comment>
<reference key="1">
    <citation type="submission" date="2007-05" db="EMBL/GenBank/DDBJ databases">
        <title>Complete sequence of Thermosipho melanesiensis BI429.</title>
        <authorList>
            <consortium name="US DOE Joint Genome Institute"/>
            <person name="Copeland A."/>
            <person name="Lucas S."/>
            <person name="Lapidus A."/>
            <person name="Barry K."/>
            <person name="Glavina del Rio T."/>
            <person name="Dalin E."/>
            <person name="Tice H."/>
            <person name="Pitluck S."/>
            <person name="Chertkov O."/>
            <person name="Brettin T."/>
            <person name="Bruce D."/>
            <person name="Detter J.C."/>
            <person name="Han C."/>
            <person name="Schmutz J."/>
            <person name="Larimer F."/>
            <person name="Land M."/>
            <person name="Hauser L."/>
            <person name="Kyrpides N."/>
            <person name="Mikhailova N."/>
            <person name="Nelson K."/>
            <person name="Gogarten J.P."/>
            <person name="Noll K."/>
            <person name="Richardson P."/>
        </authorList>
    </citation>
    <scope>NUCLEOTIDE SEQUENCE [LARGE SCALE GENOMIC DNA]</scope>
    <source>
        <strain>DSM 12029 / CIP 104789 / BI429</strain>
    </source>
</reference>
<protein>
    <recommendedName>
        <fullName evidence="1">2,3,4,5-tetrahydropyridine-2,6-dicarboxylate N-acetyltransferase</fullName>
        <ecNumber evidence="1">2.3.1.89</ecNumber>
    </recommendedName>
    <alternativeName>
        <fullName evidence="1">Tetrahydrodipicolinate N-acetyltransferase</fullName>
        <shortName evidence="1">THP acetyltransferase</shortName>
        <shortName evidence="1">Tetrahydropicolinate acetylase</shortName>
    </alternativeName>
</protein>
<accession>A6LP60</accession>